<evidence type="ECO:0000255" key="1">
    <source>
        <dbReference type="HAMAP-Rule" id="MF_01382"/>
    </source>
</evidence>
<evidence type="ECO:0000305" key="2"/>
<feature type="chain" id="PRO_0000318479" description="Protein translocase subunit SecA 2">
    <location>
        <begin position="1"/>
        <end position="766"/>
    </location>
</feature>
<feature type="binding site" evidence="1">
    <location>
        <position position="84"/>
    </location>
    <ligand>
        <name>ATP</name>
        <dbReference type="ChEBI" id="CHEBI:30616"/>
    </ligand>
</feature>
<feature type="binding site" evidence="1">
    <location>
        <begin position="102"/>
        <end position="106"/>
    </location>
    <ligand>
        <name>ATP</name>
        <dbReference type="ChEBI" id="CHEBI:30616"/>
    </ligand>
</feature>
<feature type="binding site" evidence="1">
    <location>
        <position position="490"/>
    </location>
    <ligand>
        <name>ATP</name>
        <dbReference type="ChEBI" id="CHEBI:30616"/>
    </ligand>
</feature>
<proteinExistence type="inferred from homology"/>
<sequence>MAEGVRRLLGKPGSVSLQPYIKLLKTIEEREEALRKLSDAELTEVATELGNAELPYDRDDLAELCALGREAARRTLGERPFDTQLIGMMALLDGHVAEMATGEGKTLTGALAAVGFALRGQRVHVLSVNDYLARRDAEWMRPLYTLLGVEVGWISQESTTEERRAAYAADITYASVSELGFDVLRDRLATDVSELVVPEPNVAIIDEADSVLVDEARVPLVLAGAAEPAESDAAMAELVRRLRPGIDYKVDDDGRNVHLTDTGINVVEKALGGVDLFSAEDTTLLSRVNLALHAHALLHRDVHYVVRDGKVRLINESRGRIALLQRWPDGLQAAVEAKEHLTPSETGEVLDSITVQSLVLRYPIRCGMTGTAMAVAEQLREFYELEVAVIAPNKPNIRIDEEDRLYATAEEKEEAVVEKVKEVHATGRPILIGTQDVAESERLAKRLRRAGLECVVLNAKNDAEEAAVIAEAGTYGRITVSTQMAGRGTDIRLGGSDMRDRDRVVKTGGLYVIGYGRYPSSRLDDQLRGRAGRQGDPGGSVFYVSVEDDLITTNLPEAKGYRVSSADGEITDPAWKEMVNHAQRIAEGQLLELHRNTWRYNQIIDVQRSVVLEQRRAVLHEDLGSRQLAVDCPETYQRLVEEVGEEEVARAARLVTLYHLDRGWADHNAFLADLREGIHLRFLGRRDPLDEFNRDAVPAFKGFLDEARARAAEMFEKLEVVDGRLDVAAAGVKRPSTTWTYMVQDQPFSTDLENIVGRVKNLMGRD</sequence>
<accession>Q47RW8</accession>
<keyword id="KW-0067">ATP-binding</keyword>
<keyword id="KW-1003">Cell membrane</keyword>
<keyword id="KW-0963">Cytoplasm</keyword>
<keyword id="KW-0472">Membrane</keyword>
<keyword id="KW-0547">Nucleotide-binding</keyword>
<keyword id="KW-0653">Protein transport</keyword>
<keyword id="KW-1278">Translocase</keyword>
<keyword id="KW-0811">Translocation</keyword>
<keyword id="KW-0813">Transport</keyword>
<gene>
    <name evidence="1" type="primary">secA2</name>
    <name type="ordered locus">Tfu_0761</name>
</gene>
<dbReference type="EC" id="7.4.2.8" evidence="1"/>
<dbReference type="EMBL" id="CP000088">
    <property type="protein sequence ID" value="AAZ54799.1"/>
    <property type="status" value="ALT_INIT"/>
    <property type="molecule type" value="Genomic_DNA"/>
</dbReference>
<dbReference type="RefSeq" id="WP_038043394.1">
    <property type="nucleotide sequence ID" value="NC_007333.1"/>
</dbReference>
<dbReference type="SMR" id="Q47RW8"/>
<dbReference type="STRING" id="269800.Tfu_0761"/>
<dbReference type="KEGG" id="tfu:Tfu_0761"/>
<dbReference type="eggNOG" id="COG0653">
    <property type="taxonomic scope" value="Bacteria"/>
</dbReference>
<dbReference type="HOGENOM" id="CLU_005314_3_2_11"/>
<dbReference type="OrthoDB" id="9805579at2"/>
<dbReference type="GO" id="GO:0031522">
    <property type="term" value="C:cell envelope Sec protein transport complex"/>
    <property type="evidence" value="ECO:0007669"/>
    <property type="project" value="TreeGrafter"/>
</dbReference>
<dbReference type="GO" id="GO:0005829">
    <property type="term" value="C:cytosol"/>
    <property type="evidence" value="ECO:0007669"/>
    <property type="project" value="TreeGrafter"/>
</dbReference>
<dbReference type="GO" id="GO:0005886">
    <property type="term" value="C:plasma membrane"/>
    <property type="evidence" value="ECO:0007669"/>
    <property type="project" value="UniProtKB-SubCell"/>
</dbReference>
<dbReference type="GO" id="GO:0005524">
    <property type="term" value="F:ATP binding"/>
    <property type="evidence" value="ECO:0007669"/>
    <property type="project" value="UniProtKB-UniRule"/>
</dbReference>
<dbReference type="GO" id="GO:0008564">
    <property type="term" value="F:protein-exporting ATPase activity"/>
    <property type="evidence" value="ECO:0007669"/>
    <property type="project" value="UniProtKB-EC"/>
</dbReference>
<dbReference type="GO" id="GO:0065002">
    <property type="term" value="P:intracellular protein transmembrane transport"/>
    <property type="evidence" value="ECO:0007669"/>
    <property type="project" value="UniProtKB-UniRule"/>
</dbReference>
<dbReference type="GO" id="GO:0017038">
    <property type="term" value="P:protein import"/>
    <property type="evidence" value="ECO:0007669"/>
    <property type="project" value="InterPro"/>
</dbReference>
<dbReference type="GO" id="GO:0006605">
    <property type="term" value="P:protein targeting"/>
    <property type="evidence" value="ECO:0007669"/>
    <property type="project" value="UniProtKB-UniRule"/>
</dbReference>
<dbReference type="GO" id="GO:0043952">
    <property type="term" value="P:protein transport by the Sec complex"/>
    <property type="evidence" value="ECO:0007669"/>
    <property type="project" value="TreeGrafter"/>
</dbReference>
<dbReference type="CDD" id="cd17928">
    <property type="entry name" value="DEXDc_SecA"/>
    <property type="match status" value="1"/>
</dbReference>
<dbReference type="FunFam" id="3.40.50.300:FF:000429">
    <property type="entry name" value="Preprotein translocase subunit SecA"/>
    <property type="match status" value="1"/>
</dbReference>
<dbReference type="Gene3D" id="1.10.3060.10">
    <property type="entry name" value="Helical scaffold and wing domains of SecA"/>
    <property type="match status" value="2"/>
</dbReference>
<dbReference type="Gene3D" id="3.40.50.300">
    <property type="entry name" value="P-loop containing nucleotide triphosphate hydrolases"/>
    <property type="match status" value="3"/>
</dbReference>
<dbReference type="Gene3D" id="3.90.1440.10">
    <property type="entry name" value="SecA, preprotein cross-linking domain"/>
    <property type="match status" value="1"/>
</dbReference>
<dbReference type="HAMAP" id="MF_01382">
    <property type="entry name" value="SecA"/>
    <property type="match status" value="1"/>
</dbReference>
<dbReference type="InterPro" id="IPR014001">
    <property type="entry name" value="Helicase_ATP-bd"/>
</dbReference>
<dbReference type="InterPro" id="IPR001650">
    <property type="entry name" value="Helicase_C-like"/>
</dbReference>
<dbReference type="InterPro" id="IPR027417">
    <property type="entry name" value="P-loop_NTPase"/>
</dbReference>
<dbReference type="InterPro" id="IPR000185">
    <property type="entry name" value="SecA"/>
</dbReference>
<dbReference type="InterPro" id="IPR026389">
    <property type="entry name" value="SecA_Actinobact-type"/>
</dbReference>
<dbReference type="InterPro" id="IPR020937">
    <property type="entry name" value="SecA_CS"/>
</dbReference>
<dbReference type="InterPro" id="IPR011115">
    <property type="entry name" value="SecA_DEAD"/>
</dbReference>
<dbReference type="InterPro" id="IPR014018">
    <property type="entry name" value="SecA_motor_DEAD"/>
</dbReference>
<dbReference type="InterPro" id="IPR011130">
    <property type="entry name" value="SecA_preprotein_X-link_dom"/>
</dbReference>
<dbReference type="InterPro" id="IPR044722">
    <property type="entry name" value="SecA_SF2_C"/>
</dbReference>
<dbReference type="InterPro" id="IPR011116">
    <property type="entry name" value="SecA_Wing/Scaffold"/>
</dbReference>
<dbReference type="InterPro" id="IPR036266">
    <property type="entry name" value="SecA_Wing/Scaffold_sf"/>
</dbReference>
<dbReference type="InterPro" id="IPR036670">
    <property type="entry name" value="SecA_X-link_sf"/>
</dbReference>
<dbReference type="NCBIfam" id="TIGR04221">
    <property type="entry name" value="SecA2_Mycobac"/>
    <property type="match status" value="1"/>
</dbReference>
<dbReference type="PANTHER" id="PTHR30612:SF0">
    <property type="entry name" value="CHLOROPLAST PROTEIN-TRANSPORTING ATPASE"/>
    <property type="match status" value="1"/>
</dbReference>
<dbReference type="PANTHER" id="PTHR30612">
    <property type="entry name" value="SECA INNER MEMBRANE COMPONENT OF SEC PROTEIN SECRETION SYSTEM"/>
    <property type="match status" value="1"/>
</dbReference>
<dbReference type="Pfam" id="PF21090">
    <property type="entry name" value="P-loop_SecA"/>
    <property type="match status" value="1"/>
</dbReference>
<dbReference type="Pfam" id="PF07517">
    <property type="entry name" value="SecA_DEAD"/>
    <property type="match status" value="1"/>
</dbReference>
<dbReference type="Pfam" id="PF01043">
    <property type="entry name" value="SecA_PP_bind"/>
    <property type="match status" value="1"/>
</dbReference>
<dbReference type="Pfam" id="PF07516">
    <property type="entry name" value="SecA_SW"/>
    <property type="match status" value="1"/>
</dbReference>
<dbReference type="PRINTS" id="PR00906">
    <property type="entry name" value="SECA"/>
</dbReference>
<dbReference type="SMART" id="SM00957">
    <property type="entry name" value="SecA_DEAD"/>
    <property type="match status" value="1"/>
</dbReference>
<dbReference type="SMART" id="SM00958">
    <property type="entry name" value="SecA_PP_bind"/>
    <property type="match status" value="1"/>
</dbReference>
<dbReference type="SUPFAM" id="SSF81886">
    <property type="entry name" value="Helical scaffold and wing domains of SecA"/>
    <property type="match status" value="1"/>
</dbReference>
<dbReference type="SUPFAM" id="SSF52540">
    <property type="entry name" value="P-loop containing nucleoside triphosphate hydrolases"/>
    <property type="match status" value="2"/>
</dbReference>
<dbReference type="SUPFAM" id="SSF81767">
    <property type="entry name" value="Pre-protein crosslinking domain of SecA"/>
    <property type="match status" value="1"/>
</dbReference>
<dbReference type="PROSITE" id="PS01312">
    <property type="entry name" value="SECA"/>
    <property type="match status" value="1"/>
</dbReference>
<dbReference type="PROSITE" id="PS51196">
    <property type="entry name" value="SECA_MOTOR_DEAD"/>
    <property type="match status" value="1"/>
</dbReference>
<organism>
    <name type="scientific">Thermobifida fusca (strain YX)</name>
    <dbReference type="NCBI Taxonomy" id="269800"/>
    <lineage>
        <taxon>Bacteria</taxon>
        <taxon>Bacillati</taxon>
        <taxon>Actinomycetota</taxon>
        <taxon>Actinomycetes</taxon>
        <taxon>Streptosporangiales</taxon>
        <taxon>Nocardiopsidaceae</taxon>
        <taxon>Thermobifida</taxon>
    </lineage>
</organism>
<name>SECA2_THEFY</name>
<reference key="1">
    <citation type="journal article" date="2007" name="J. Bacteriol.">
        <title>Genome sequence and analysis of the soil cellulolytic actinomycete Thermobifida fusca YX.</title>
        <authorList>
            <person name="Lykidis A."/>
            <person name="Mavromatis K."/>
            <person name="Ivanova N."/>
            <person name="Anderson I."/>
            <person name="Land M."/>
            <person name="DiBartolo G."/>
            <person name="Martinez M."/>
            <person name="Lapidus A."/>
            <person name="Lucas S."/>
            <person name="Copeland A."/>
            <person name="Richardson P."/>
            <person name="Wilson D.B."/>
            <person name="Kyrpides N."/>
        </authorList>
    </citation>
    <scope>NUCLEOTIDE SEQUENCE [LARGE SCALE GENOMIC DNA]</scope>
    <source>
        <strain>YX</strain>
    </source>
</reference>
<protein>
    <recommendedName>
        <fullName evidence="1">Protein translocase subunit SecA 2</fullName>
        <ecNumber evidence="1">7.4.2.8</ecNumber>
    </recommendedName>
</protein>
<comment type="function">
    <text evidence="1">Part of the Sec protein translocase complex. Interacts with the SecYEG preprotein conducting channel. Has a central role in coupling the hydrolysis of ATP to the transfer of proteins into and across the cell membrane, serving as an ATP-driven molecular motor driving the stepwise translocation of polypeptide chains across the membrane.</text>
</comment>
<comment type="catalytic activity">
    <reaction evidence="1">
        <text>ATP + H2O + cellular proteinSide 1 = ADP + phosphate + cellular proteinSide 2.</text>
        <dbReference type="EC" id="7.4.2.8"/>
    </reaction>
</comment>
<comment type="subunit">
    <text evidence="1">Monomer and homodimer. Part of the essential Sec protein translocation apparatus which comprises SecA, SecYEG and auxiliary proteins SecDF. Other proteins may also be involved.</text>
</comment>
<comment type="subcellular location">
    <subcellularLocation>
        <location evidence="1">Cell membrane</location>
        <topology evidence="1">Peripheral membrane protein</topology>
        <orientation evidence="1">Cytoplasmic side</orientation>
    </subcellularLocation>
    <subcellularLocation>
        <location evidence="1">Cytoplasm</location>
    </subcellularLocation>
    <text evidence="1">Distribution is 50-50.</text>
</comment>
<comment type="similarity">
    <text evidence="1">Belongs to the SecA family.</text>
</comment>
<comment type="sequence caution" evidence="2">
    <conflict type="erroneous initiation">
        <sequence resource="EMBL-CDS" id="AAZ54799"/>
    </conflict>
    <text>Truncated N-terminus.</text>
</comment>